<reference key="1">
    <citation type="journal article" date="1986" name="J. Biochem.">
        <title>The complete nucleotide sequence of the group II RNA coliphage GA.</title>
        <authorList>
            <person name="Inokuchi Y."/>
            <person name="Takahashi R."/>
            <person name="Hirose T."/>
            <person name="Inayama S."/>
            <person name="Jacobson A.B."/>
            <person name="Hirashima A."/>
        </authorList>
    </citation>
    <scope>NUCLEOTIDE SEQUENCE [MRNA]</scope>
</reference>
<reference key="2">
    <citation type="journal article" date="1997" name="J. Mol. Biol.">
        <title>The crystal structure of bacteriophage GA and a comparison of bacteriophages belonging to the major groups of Escherichia coli leviviruses.</title>
        <authorList>
            <person name="Tars K."/>
            <person name="Bundule M."/>
            <person name="Fridborg K."/>
            <person name="Liljas L."/>
        </authorList>
    </citation>
    <scope>X-RAY CRYSTALLOGRAPHY (3.4 ANGSTROMS)</scope>
</reference>
<reference key="3">
    <citation type="journal article" date="1996" name="Protein Sci.">
        <title>Crystal structure of the coat protein from the GA bacteriophage: model of the unassembled dimer.</title>
        <authorList>
            <person name="Ni C.-Z."/>
            <person name="White C.A."/>
            <person name="Mitchell R.S."/>
            <person name="Wickersham J."/>
            <person name="Kodandapani R."/>
            <person name="Peabody D.S."/>
            <person name="Ely K.R."/>
        </authorList>
    </citation>
    <scope>X-RAY CRYSTALLOGRAPHY (2.8 ANGSTROMS)</scope>
</reference>
<protein>
    <recommendedName>
        <fullName>Capsid protein</fullName>
        <shortName>CP</shortName>
    </recommendedName>
    <alternativeName>
        <fullName>Coat protein</fullName>
    </alternativeName>
</protein>
<proteinExistence type="evidence at protein level"/>
<accession>P07234</accession>
<sequence length="130" mass="13683">MATLRSFVLVDNGGTGNVTVVPVSNANGVAEWLSNNSRSQAYRVTASYRASGADKRKYAIKLEVPKIVTQVVNGVELPGSAWKAYASIDLTIPIFAATDDVTVISKSLAGLFKVGNPIAEAISSQSGFYA</sequence>
<organismHost>
    <name type="scientific">Escherichia coli</name>
    <dbReference type="NCBI Taxonomy" id="562"/>
</organismHost>
<comment type="function">
    <text evidence="1">Capsid protein self-assembles to form an icosahedral capsid with a T=3 symmetry, about 26 nm in diameter, and consisting of 89 capsid proteins dimers (178 capsid proteins). Involved in viral genome encapsidation through the interaction between a capsid protein dimer and the multiple packaging signals present in the RNA genome. The capsid also contains 1 copy of the A2 maturation protein.</text>
</comment>
<comment type="function">
    <text evidence="1">Acts as a translational repressor of viral replicase synthesis late in infection. This latter function is the result of capsid protein interaction with an RNA hairpin which contains the replicase ribosome-binding site.</text>
</comment>
<comment type="subunit">
    <text evidence="1">Homodimer. The capsid proteins form dimers that assemble by group of 5. Twelve such pentamers are linked together with free dimers. The homodimers binds to the viral RNA via an operator hairpin, but also to many other RNA sequences in the viral genome; this interaction probably shifts the virus from the replicative to the assembly phase and ensures specific encapsidation of the viral genome.</text>
</comment>
<comment type="subcellular location">
    <subcellularLocation>
        <location evidence="1">Virion</location>
    </subcellularLocation>
    <text evidence="1">The shell is composed of 178 copies of the capsid protein and 1 copy of the maturation protein.</text>
</comment>
<comment type="similarity">
    <text evidence="3">Belongs to the Leviviricetes capsid protein family.</text>
</comment>
<comment type="online information" name="Virus Particle ExploreR db">
    <link uri="https://viperdb.org/Info_Page.php?VDB=1gav"/>
    <text>Icosahedral capsid structure with 4 residue deletion FG loop</text>
</comment>
<dbReference type="EMBL" id="X03869">
    <property type="protein sequence ID" value="CAA27497.1"/>
    <property type="molecule type" value="mRNA"/>
</dbReference>
<dbReference type="PIR" id="A29178">
    <property type="entry name" value="VCBPGA"/>
</dbReference>
<dbReference type="RefSeq" id="YP_010377186.1">
    <property type="nucleotide sequence ID" value="NC_001426.1"/>
</dbReference>
<dbReference type="PDB" id="1GAV">
    <property type="method" value="X-ray"/>
    <property type="resolution" value="3.40 A"/>
    <property type="chains" value="0/1/2/3/4/5/6/7/8/9/A/B/C/D/E/F/G/H/I/J/K/L/M/N/O/P/Q/R/S/T/U/V/W/X/Y/Z/a/b/c/d/e/f/g/h/i=2-130"/>
</dbReference>
<dbReference type="PDB" id="1UNA">
    <property type="method" value="X-ray"/>
    <property type="resolution" value="2.80 A"/>
    <property type="chains" value="A/B=2-130"/>
</dbReference>
<dbReference type="PDBsum" id="1GAV"/>
<dbReference type="PDBsum" id="1UNA"/>
<dbReference type="SMR" id="P07234"/>
<dbReference type="GeneID" id="1261003"/>
<dbReference type="EvolutionaryTrace" id="P07234"/>
<dbReference type="Proteomes" id="UP000002126">
    <property type="component" value="Genome"/>
</dbReference>
<dbReference type="GO" id="GO:0039617">
    <property type="term" value="C:T=3 icosahedral viral capsid"/>
    <property type="evidence" value="ECO:0007669"/>
    <property type="project" value="UniProtKB-KW"/>
</dbReference>
<dbReference type="GO" id="GO:0003723">
    <property type="term" value="F:RNA binding"/>
    <property type="evidence" value="ECO:0007669"/>
    <property type="project" value="UniProtKB-KW"/>
</dbReference>
<dbReference type="GO" id="GO:0005198">
    <property type="term" value="F:structural molecule activity"/>
    <property type="evidence" value="ECO:0007669"/>
    <property type="project" value="InterPro"/>
</dbReference>
<dbReference type="GO" id="GO:0006417">
    <property type="term" value="P:regulation of translation"/>
    <property type="evidence" value="ECO:0007669"/>
    <property type="project" value="UniProtKB-KW"/>
</dbReference>
<dbReference type="Gene3D" id="3.30.380.10">
    <property type="entry name" value="MS2 Viral Coat Protein"/>
    <property type="match status" value="1"/>
</dbReference>
<dbReference type="InterPro" id="IPR002703">
    <property type="entry name" value="Levivir_coat"/>
</dbReference>
<dbReference type="InterPro" id="IPR015954">
    <property type="entry name" value="Phage_RNA-type_capsid"/>
</dbReference>
<dbReference type="Pfam" id="PF01819">
    <property type="entry name" value="Levi_coat"/>
    <property type="match status" value="1"/>
</dbReference>
<dbReference type="SUPFAM" id="SSF55405">
    <property type="entry name" value="RNA bacteriophage capsid protein"/>
    <property type="match status" value="1"/>
</dbReference>
<evidence type="ECO:0000250" key="1">
    <source>
        <dbReference type="UniProtKB" id="P03612"/>
    </source>
</evidence>
<evidence type="ECO:0000250" key="2">
    <source>
        <dbReference type="UniProtKB" id="P69171"/>
    </source>
</evidence>
<evidence type="ECO:0000305" key="3"/>
<evidence type="ECO:0007829" key="4">
    <source>
        <dbReference type="PDB" id="1UNA"/>
    </source>
</evidence>
<feature type="initiator methionine" description="Removed; by host" evidence="2">
    <location>
        <position position="1"/>
    </location>
</feature>
<feature type="chain" id="PRO_0000164841" description="Capsid protein">
    <location>
        <begin position="2"/>
        <end position="130"/>
    </location>
</feature>
<feature type="region of interest" description="Viral RNA-binding" evidence="1">
    <location>
        <begin position="31"/>
        <end position="104"/>
    </location>
</feature>
<feature type="strand" evidence="4">
    <location>
        <begin position="7"/>
        <end position="10"/>
    </location>
</feature>
<feature type="strand" evidence="4">
    <location>
        <begin position="12"/>
        <end position="16"/>
    </location>
</feature>
<feature type="strand" evidence="4">
    <location>
        <begin position="18"/>
        <end position="24"/>
    </location>
</feature>
<feature type="helix" evidence="4">
    <location>
        <begin position="26"/>
        <end position="28"/>
    </location>
</feature>
<feature type="strand" evidence="4">
    <location>
        <begin position="30"/>
        <end position="36"/>
    </location>
</feature>
<feature type="helix" evidence="4">
    <location>
        <begin position="38"/>
        <end position="40"/>
    </location>
</feature>
<feature type="strand" evidence="4">
    <location>
        <begin position="43"/>
        <end position="51"/>
    </location>
</feature>
<feature type="turn" evidence="4">
    <location>
        <begin position="52"/>
        <end position="54"/>
    </location>
</feature>
<feature type="strand" evidence="4">
    <location>
        <begin position="55"/>
        <end position="65"/>
    </location>
</feature>
<feature type="strand" evidence="4">
    <location>
        <begin position="83"/>
        <end position="93"/>
    </location>
</feature>
<feature type="helix" evidence="4">
    <location>
        <begin position="102"/>
        <end position="111"/>
    </location>
</feature>
<feature type="helix" evidence="4">
    <location>
        <begin position="117"/>
        <end position="124"/>
    </location>
</feature>
<name>CAPSD_BPGA</name>
<keyword id="KW-0002">3D-structure</keyword>
<keyword id="KW-0167">Capsid protein</keyword>
<keyword id="KW-1185">Reference proteome</keyword>
<keyword id="KW-0694">RNA-binding</keyword>
<keyword id="KW-1142">T=3 icosahedral capsid protein</keyword>
<keyword id="KW-0810">Translation regulation</keyword>
<keyword id="KW-0946">Virion</keyword>
<organism>
    <name type="scientific">Enterobacteria phage GA</name>
    <name type="common">Bacteriophage GA</name>
    <dbReference type="NCBI Taxonomy" id="12018"/>
    <lineage>
        <taxon>Viruses</taxon>
        <taxon>Riboviria</taxon>
        <taxon>Orthornavirae</taxon>
        <taxon>Lenarviricota</taxon>
        <taxon>Leviviricetes</taxon>
        <taxon>Norzivirales</taxon>
        <taxon>Fiersviridae</taxon>
        <taxon>Emesvirus</taxon>
        <taxon>Escherichia phage BZ13</taxon>
    </lineage>
</organism>